<organism>
    <name type="scientific">Actinobacillus pleuropneumoniae</name>
    <name type="common">Haemophilus pleuropneumoniae</name>
    <dbReference type="NCBI Taxonomy" id="715"/>
    <lineage>
        <taxon>Bacteria</taxon>
        <taxon>Pseudomonadati</taxon>
        <taxon>Pseudomonadota</taxon>
        <taxon>Gammaproteobacteria</taxon>
        <taxon>Pasteurellales</taxon>
        <taxon>Pasteurellaceae</taxon>
        <taxon>Actinobacillus</taxon>
    </lineage>
</organism>
<sequence length="376" mass="41278">MCFPLPSNSFKTMTDLDYMRRAIALAKQGLGWTNPNPLVGCVIVKNGEIVAEGYHEKIGGWHAERNAVLHCKEDLSGATAYVTLEPCCHHGRTPPCSDLLIERGIKKVFIGSSDPNPLVAGRGANQLRQAGVEVVEGLLKEECDALNPIFFHYIQTKRPYVLMKYAMTADGKIATGSGESKWITGESARARVQQTRHQYSAIMVGVDTVLADNPMLNSRMPNAKQPVRIVCDSQLRTPLDCQLVQTAKEYRTVIATVSDDLQKIEQFRPLGVDVLVCKARNKRVDLQDLLQKLGEMQIDSLLLEGGSSLNFSALESGIVNRVHCYIAPKLVGGKQAKTPIGGEGIQQIDQAVKLKLKSTELIGEDILLDYVVISPL</sequence>
<comment type="function">
    <text>Converts 2,5-diamino-6-(ribosylamino)-4(3h)-pyrimidinone 5'-phosphate into 5-amino-6-(ribosylamino)-2,4(1h,3h)-pyrimidinedione 5'-phosphate.</text>
</comment>
<comment type="catalytic activity">
    <reaction>
        <text>2,5-diamino-6-hydroxy-4-(5-phosphoribosylamino)-pyrimidine + H2O + H(+) = 5-amino-6-(5-phospho-D-ribosylamino)uracil + NH4(+)</text>
        <dbReference type="Rhea" id="RHEA:21868"/>
        <dbReference type="ChEBI" id="CHEBI:15377"/>
        <dbReference type="ChEBI" id="CHEBI:15378"/>
        <dbReference type="ChEBI" id="CHEBI:28938"/>
        <dbReference type="ChEBI" id="CHEBI:58453"/>
        <dbReference type="ChEBI" id="CHEBI:58614"/>
        <dbReference type="EC" id="3.5.4.26"/>
    </reaction>
</comment>
<comment type="catalytic activity">
    <reaction>
        <text>5-amino-6-(5-phospho-D-ribitylamino)uracil + NADP(+) = 5-amino-6-(5-phospho-D-ribosylamino)uracil + NADPH + H(+)</text>
        <dbReference type="Rhea" id="RHEA:17845"/>
        <dbReference type="ChEBI" id="CHEBI:15378"/>
        <dbReference type="ChEBI" id="CHEBI:57783"/>
        <dbReference type="ChEBI" id="CHEBI:58349"/>
        <dbReference type="ChEBI" id="CHEBI:58421"/>
        <dbReference type="ChEBI" id="CHEBI:58453"/>
        <dbReference type="EC" id="1.1.1.193"/>
    </reaction>
</comment>
<comment type="cofactor">
    <cofactor evidence="1">
        <name>Zn(2+)</name>
        <dbReference type="ChEBI" id="CHEBI:29105"/>
    </cofactor>
    <text evidence="1">Binds 1 zinc ion.</text>
</comment>
<comment type="pathway">
    <text>Cofactor biosynthesis; riboflavin biosynthesis; 5-amino-6-(D-ribitylamino)uracil from GTP: step 2/4.</text>
</comment>
<comment type="pathway">
    <text>Cofactor biosynthesis; riboflavin biosynthesis; 5-amino-6-(D-ribitylamino)uracil from GTP: step 3/4.</text>
</comment>
<comment type="similarity">
    <text evidence="3">In the N-terminal section; belongs to the cytidine and deoxycytidylate deaminase family.</text>
</comment>
<comment type="similarity">
    <text evidence="3">In the C-terminal section; belongs to the HTP reductase family.</text>
</comment>
<comment type="sequence caution" evidence="3">
    <conflict type="erroneous initiation">
        <sequence resource="EMBL-CDS" id="AAA86522"/>
    </conflict>
</comment>
<evidence type="ECO:0000250" key="1"/>
<evidence type="ECO:0000255" key="2">
    <source>
        <dbReference type="PROSITE-ProRule" id="PRU01083"/>
    </source>
</evidence>
<evidence type="ECO:0000305" key="3"/>
<dbReference type="EC" id="3.5.4.26"/>
<dbReference type="EC" id="1.1.1.193"/>
<dbReference type="EMBL" id="U27202">
    <property type="protein sequence ID" value="AAA86522.1"/>
    <property type="status" value="ALT_INIT"/>
    <property type="molecule type" value="Genomic_DNA"/>
</dbReference>
<dbReference type="PIR" id="T50546">
    <property type="entry name" value="T50546"/>
</dbReference>
<dbReference type="SMR" id="P50853"/>
<dbReference type="UniPathway" id="UPA00275">
    <property type="reaction ID" value="UER00401"/>
</dbReference>
<dbReference type="UniPathway" id="UPA00275">
    <property type="reaction ID" value="UER00402"/>
</dbReference>
<dbReference type="GO" id="GO:0008703">
    <property type="term" value="F:5-amino-6-(5-phosphoribosylamino)uracil reductase activity"/>
    <property type="evidence" value="ECO:0007669"/>
    <property type="project" value="UniProtKB-EC"/>
</dbReference>
<dbReference type="GO" id="GO:0008835">
    <property type="term" value="F:diaminohydroxyphosphoribosylaminopyrimidine deaminase activity"/>
    <property type="evidence" value="ECO:0007669"/>
    <property type="project" value="UniProtKB-EC"/>
</dbReference>
<dbReference type="GO" id="GO:0050661">
    <property type="term" value="F:NADP binding"/>
    <property type="evidence" value="ECO:0007669"/>
    <property type="project" value="InterPro"/>
</dbReference>
<dbReference type="GO" id="GO:0008270">
    <property type="term" value="F:zinc ion binding"/>
    <property type="evidence" value="ECO:0007669"/>
    <property type="project" value="InterPro"/>
</dbReference>
<dbReference type="GO" id="GO:0009231">
    <property type="term" value="P:riboflavin biosynthetic process"/>
    <property type="evidence" value="ECO:0007669"/>
    <property type="project" value="UniProtKB-UniPathway"/>
</dbReference>
<dbReference type="CDD" id="cd01284">
    <property type="entry name" value="Riboflavin_deaminase-reductase"/>
    <property type="match status" value="1"/>
</dbReference>
<dbReference type="FunFam" id="3.40.140.10:FF:000025">
    <property type="entry name" value="Riboflavin biosynthesis protein RibD"/>
    <property type="match status" value="1"/>
</dbReference>
<dbReference type="Gene3D" id="3.40.140.10">
    <property type="entry name" value="Cytidine Deaminase, domain 2"/>
    <property type="match status" value="1"/>
</dbReference>
<dbReference type="Gene3D" id="3.40.430.10">
    <property type="entry name" value="Dihydrofolate Reductase, subunit A"/>
    <property type="match status" value="1"/>
</dbReference>
<dbReference type="InterPro" id="IPR016192">
    <property type="entry name" value="APOBEC/CMP_deaminase_Zn-bd"/>
</dbReference>
<dbReference type="InterPro" id="IPR002125">
    <property type="entry name" value="CMP_dCMP_dom"/>
</dbReference>
<dbReference type="InterPro" id="IPR016193">
    <property type="entry name" value="Cytidine_deaminase-like"/>
</dbReference>
<dbReference type="InterPro" id="IPR024072">
    <property type="entry name" value="DHFR-like_dom_sf"/>
</dbReference>
<dbReference type="InterPro" id="IPR004794">
    <property type="entry name" value="Eubact_RibD"/>
</dbReference>
<dbReference type="InterPro" id="IPR011549">
    <property type="entry name" value="RibD_C"/>
</dbReference>
<dbReference type="InterPro" id="IPR002734">
    <property type="entry name" value="RibDG_C"/>
</dbReference>
<dbReference type="InterPro" id="IPR050765">
    <property type="entry name" value="Riboflavin_Biosynth_HTPR"/>
</dbReference>
<dbReference type="NCBIfam" id="TIGR00326">
    <property type="entry name" value="eubact_ribD"/>
    <property type="match status" value="1"/>
</dbReference>
<dbReference type="NCBIfam" id="TIGR00227">
    <property type="entry name" value="ribD_Cterm"/>
    <property type="match status" value="1"/>
</dbReference>
<dbReference type="PANTHER" id="PTHR38011:SF7">
    <property type="entry name" value="2,5-DIAMINO-6-RIBOSYLAMINO-4(3H)-PYRIMIDINONE 5'-PHOSPHATE REDUCTASE"/>
    <property type="match status" value="1"/>
</dbReference>
<dbReference type="PANTHER" id="PTHR38011">
    <property type="entry name" value="DIHYDROFOLATE REDUCTASE FAMILY PROTEIN (AFU_ORTHOLOGUE AFUA_8G06820)"/>
    <property type="match status" value="1"/>
</dbReference>
<dbReference type="Pfam" id="PF00383">
    <property type="entry name" value="dCMP_cyt_deam_1"/>
    <property type="match status" value="1"/>
</dbReference>
<dbReference type="Pfam" id="PF01872">
    <property type="entry name" value="RibD_C"/>
    <property type="match status" value="1"/>
</dbReference>
<dbReference type="PIRSF" id="PIRSF006769">
    <property type="entry name" value="RibD"/>
    <property type="match status" value="1"/>
</dbReference>
<dbReference type="SUPFAM" id="SSF53927">
    <property type="entry name" value="Cytidine deaminase-like"/>
    <property type="match status" value="1"/>
</dbReference>
<dbReference type="SUPFAM" id="SSF53597">
    <property type="entry name" value="Dihydrofolate reductase-like"/>
    <property type="match status" value="1"/>
</dbReference>
<dbReference type="PROSITE" id="PS00903">
    <property type="entry name" value="CYT_DCMP_DEAMINASES_1"/>
    <property type="match status" value="1"/>
</dbReference>
<dbReference type="PROSITE" id="PS51747">
    <property type="entry name" value="CYT_DCMP_DEAMINASES_2"/>
    <property type="match status" value="1"/>
</dbReference>
<name>RIBD_ACTPL</name>
<keyword id="KW-0378">Hydrolase</keyword>
<keyword id="KW-0479">Metal-binding</keyword>
<keyword id="KW-0511">Multifunctional enzyme</keyword>
<keyword id="KW-0521">NADP</keyword>
<keyword id="KW-0560">Oxidoreductase</keyword>
<keyword id="KW-0686">Riboflavin biosynthesis</keyword>
<keyword id="KW-0862">Zinc</keyword>
<protein>
    <recommendedName>
        <fullName>Riboflavin biosynthesis protein RibD</fullName>
    </recommendedName>
    <domain>
        <recommendedName>
            <fullName>Diaminohydroxyphosphoribosylaminopyrimidine deaminase</fullName>
            <shortName>DRAP deaminase</shortName>
            <ecNumber>3.5.4.26</ecNumber>
        </recommendedName>
        <alternativeName>
            <fullName>Riboflavin-specific deaminase</fullName>
        </alternativeName>
    </domain>
    <domain>
        <recommendedName>
            <fullName>5-amino-6-(5-phosphoribosylamino)uracil reductase</fullName>
            <ecNumber>1.1.1.193</ecNumber>
        </recommendedName>
        <alternativeName>
            <fullName>HTP reductase</fullName>
        </alternativeName>
    </domain>
</protein>
<gene>
    <name type="primary">ribD</name>
    <name type="synonym">ribG</name>
</gene>
<feature type="chain" id="PRO_0000171712" description="Riboflavin biosynthesis protein RibD">
    <location>
        <begin position="1"/>
        <end position="376"/>
    </location>
</feature>
<feature type="domain" description="CMP/dCMP-type deaminase" evidence="2">
    <location>
        <begin position="13"/>
        <end position="135"/>
    </location>
</feature>
<feature type="region of interest" description="Deaminase">
    <location>
        <begin position="1"/>
        <end position="157"/>
    </location>
</feature>
<feature type="region of interest" description="Reductase">
    <location>
        <begin position="158"/>
        <end position="376"/>
    </location>
</feature>
<feature type="active site" description="Proton donor" evidence="1">
    <location>
        <position position="64"/>
    </location>
</feature>
<feature type="binding site" evidence="1">
    <location>
        <position position="62"/>
    </location>
    <ligand>
        <name>Zn(2+)</name>
        <dbReference type="ChEBI" id="CHEBI:29105"/>
        <note>catalytic</note>
    </ligand>
</feature>
<feature type="binding site" evidence="1">
    <location>
        <position position="87"/>
    </location>
    <ligand>
        <name>Zn(2+)</name>
        <dbReference type="ChEBI" id="CHEBI:29105"/>
        <note>catalytic</note>
    </ligand>
</feature>
<feature type="binding site" evidence="1">
    <location>
        <position position="96"/>
    </location>
    <ligand>
        <name>Zn(2+)</name>
        <dbReference type="ChEBI" id="CHEBI:29105"/>
        <note>catalytic</note>
    </ligand>
</feature>
<feature type="binding site" evidence="1">
    <location>
        <position position="166"/>
    </location>
    <ligand>
        <name>NADP(+)</name>
        <dbReference type="ChEBI" id="CHEBI:58349"/>
    </ligand>
</feature>
<feature type="binding site" evidence="1">
    <location>
        <position position="180"/>
    </location>
    <ligand>
        <name>substrate</name>
    </ligand>
</feature>
<feature type="binding site" evidence="1">
    <location>
        <position position="182"/>
    </location>
    <ligand>
        <name>NADP(+)</name>
        <dbReference type="ChEBI" id="CHEBI:58349"/>
    </ligand>
</feature>
<feature type="binding site" evidence="1">
    <location>
        <position position="196"/>
    </location>
    <ligand>
        <name>substrate</name>
    </ligand>
</feature>
<feature type="binding site" evidence="1">
    <location>
        <position position="208"/>
    </location>
    <ligand>
        <name>NADP(+)</name>
        <dbReference type="ChEBI" id="CHEBI:58349"/>
    </ligand>
</feature>
<feature type="binding site" evidence="1">
    <location>
        <position position="212"/>
    </location>
    <ligand>
        <name>NADP(+)</name>
        <dbReference type="ChEBI" id="CHEBI:58349"/>
    </ligand>
</feature>
<feature type="binding site" evidence="1">
    <location>
        <position position="216"/>
    </location>
    <ligand>
        <name>substrate</name>
    </ligand>
</feature>
<feature type="binding site" evidence="1">
    <location>
        <position position="219"/>
    </location>
    <ligand>
        <name>substrate</name>
    </ligand>
</feature>
<feature type="binding site" evidence="1">
    <location>
        <position position="233"/>
    </location>
    <ligand>
        <name>NADP(+)</name>
        <dbReference type="ChEBI" id="CHEBI:58349"/>
    </ligand>
</feature>
<feature type="binding site" evidence="1">
    <location>
        <position position="304"/>
    </location>
    <ligand>
        <name>substrate</name>
    </ligand>
</feature>
<feature type="binding site" evidence="1">
    <location>
        <begin position="306"/>
        <end position="312"/>
    </location>
    <ligand>
        <name>NADP(+)</name>
        <dbReference type="ChEBI" id="CHEBI:58349"/>
    </ligand>
</feature>
<accession>P50853</accession>
<reference key="1">
    <citation type="journal article" date="1995" name="J. Bacteriol.">
        <title>Characterization of Actinobacillus pleuropneumoniae riboflavin biosynthesis genes.</title>
        <authorList>
            <person name="Fuller T.E."/>
            <person name="Mulks M.H."/>
        </authorList>
    </citation>
    <scope>NUCLEOTIDE SEQUENCE [GENOMIC DNA]</scope>
    <source>
        <strain>ISU-178 / Serotype 5</strain>
    </source>
</reference>
<proteinExistence type="inferred from homology"/>